<feature type="chain" id="PRO_1000184783" description="ATP synthase subunit delta">
    <location>
        <begin position="1"/>
        <end position="186"/>
    </location>
</feature>
<evidence type="ECO:0000255" key="1">
    <source>
        <dbReference type="HAMAP-Rule" id="MF_01416"/>
    </source>
</evidence>
<organism>
    <name type="scientific">Rhodospirillum rubrum (strain ATCC 11170 / ATH 1.1.1 / DSM 467 / LMG 4362 / NCIMB 8255 / S1)</name>
    <dbReference type="NCBI Taxonomy" id="269796"/>
    <lineage>
        <taxon>Bacteria</taxon>
        <taxon>Pseudomonadati</taxon>
        <taxon>Pseudomonadota</taxon>
        <taxon>Alphaproteobacteria</taxon>
        <taxon>Rhodospirillales</taxon>
        <taxon>Rhodospirillaceae</taxon>
        <taxon>Rhodospirillum</taxon>
    </lineage>
</organism>
<gene>
    <name evidence="1" type="primary">atpH</name>
    <name type="ordered locus">Rru_A1223</name>
</gene>
<protein>
    <recommendedName>
        <fullName evidence="1">ATP synthase subunit delta</fullName>
    </recommendedName>
    <alternativeName>
        <fullName evidence="1">ATP synthase F(1) sector subunit delta</fullName>
    </alternativeName>
    <alternativeName>
        <fullName evidence="1">F-type ATPase subunit delta</fullName>
        <shortName evidence="1">F-ATPase subunit delta</shortName>
    </alternativeName>
</protein>
<dbReference type="EMBL" id="CP000230">
    <property type="protein sequence ID" value="ABC22024.1"/>
    <property type="molecule type" value="Genomic_DNA"/>
</dbReference>
<dbReference type="RefSeq" id="WP_011388978.1">
    <property type="nucleotide sequence ID" value="NC_007643.1"/>
</dbReference>
<dbReference type="RefSeq" id="YP_426311.1">
    <property type="nucleotide sequence ID" value="NC_007643.1"/>
</dbReference>
<dbReference type="SMR" id="Q2RV21"/>
<dbReference type="STRING" id="269796.Rru_A1223"/>
<dbReference type="EnsemblBacteria" id="ABC22024">
    <property type="protein sequence ID" value="ABC22024"/>
    <property type="gene ID" value="Rru_A1223"/>
</dbReference>
<dbReference type="KEGG" id="rru:Rru_A1223"/>
<dbReference type="PATRIC" id="fig|269796.9.peg.1288"/>
<dbReference type="eggNOG" id="COG0712">
    <property type="taxonomic scope" value="Bacteria"/>
</dbReference>
<dbReference type="HOGENOM" id="CLU_085114_0_1_5"/>
<dbReference type="PhylomeDB" id="Q2RV21"/>
<dbReference type="Proteomes" id="UP000001929">
    <property type="component" value="Chromosome"/>
</dbReference>
<dbReference type="GO" id="GO:0005886">
    <property type="term" value="C:plasma membrane"/>
    <property type="evidence" value="ECO:0007669"/>
    <property type="project" value="UniProtKB-SubCell"/>
</dbReference>
<dbReference type="GO" id="GO:0045259">
    <property type="term" value="C:proton-transporting ATP synthase complex"/>
    <property type="evidence" value="ECO:0007669"/>
    <property type="project" value="UniProtKB-KW"/>
</dbReference>
<dbReference type="GO" id="GO:0046933">
    <property type="term" value="F:proton-transporting ATP synthase activity, rotational mechanism"/>
    <property type="evidence" value="ECO:0007669"/>
    <property type="project" value="UniProtKB-UniRule"/>
</dbReference>
<dbReference type="Gene3D" id="1.10.520.20">
    <property type="entry name" value="N-terminal domain of the delta subunit of the F1F0-ATP synthase"/>
    <property type="match status" value="1"/>
</dbReference>
<dbReference type="HAMAP" id="MF_01416">
    <property type="entry name" value="ATP_synth_delta_bact"/>
    <property type="match status" value="1"/>
</dbReference>
<dbReference type="InterPro" id="IPR026015">
    <property type="entry name" value="ATP_synth_OSCP/delta_N_sf"/>
</dbReference>
<dbReference type="InterPro" id="IPR020781">
    <property type="entry name" value="ATPase_OSCP/d_CS"/>
</dbReference>
<dbReference type="InterPro" id="IPR000711">
    <property type="entry name" value="ATPase_OSCP/dsu"/>
</dbReference>
<dbReference type="NCBIfam" id="TIGR01145">
    <property type="entry name" value="ATP_synt_delta"/>
    <property type="match status" value="1"/>
</dbReference>
<dbReference type="NCBIfam" id="NF004406">
    <property type="entry name" value="PRK05758.3-2"/>
    <property type="match status" value="1"/>
</dbReference>
<dbReference type="PANTHER" id="PTHR11910">
    <property type="entry name" value="ATP SYNTHASE DELTA CHAIN"/>
    <property type="match status" value="1"/>
</dbReference>
<dbReference type="Pfam" id="PF00213">
    <property type="entry name" value="OSCP"/>
    <property type="match status" value="1"/>
</dbReference>
<dbReference type="PRINTS" id="PR00125">
    <property type="entry name" value="ATPASEDELTA"/>
</dbReference>
<dbReference type="SUPFAM" id="SSF47928">
    <property type="entry name" value="N-terminal domain of the delta subunit of the F1F0-ATP synthase"/>
    <property type="match status" value="1"/>
</dbReference>
<dbReference type="PROSITE" id="PS00389">
    <property type="entry name" value="ATPASE_DELTA"/>
    <property type="match status" value="1"/>
</dbReference>
<keyword id="KW-0066">ATP synthesis</keyword>
<keyword id="KW-0997">Cell inner membrane</keyword>
<keyword id="KW-1003">Cell membrane</keyword>
<keyword id="KW-0139">CF(1)</keyword>
<keyword id="KW-0375">Hydrogen ion transport</keyword>
<keyword id="KW-0406">Ion transport</keyword>
<keyword id="KW-0472">Membrane</keyword>
<keyword id="KW-1185">Reference proteome</keyword>
<keyword id="KW-0813">Transport</keyword>
<proteinExistence type="inferred from homology"/>
<name>ATPD_RHORT</name>
<sequence length="186" mass="19576">MSSHKAGVTGVAERYATALYELAEDRGALDQVSADLRSLKAMLDESGDLRRVIASPVIGRDDQRKALTALAEKAGFHEIVRNFLGVVAAKHRSFAVPGMIGAFLERLAARRGEVTARIVSATALTSAQKSALTTALNKATGNTVTIDASVDPALLGGMVVRVGSRMVDSSLSTKLKRLQLAMKGVG</sequence>
<comment type="function">
    <text evidence="1">F(1)F(0) ATP synthase produces ATP from ADP in the presence of a proton or sodium gradient. F-type ATPases consist of two structural domains, F(1) containing the extramembraneous catalytic core and F(0) containing the membrane proton channel, linked together by a central stalk and a peripheral stalk. During catalysis, ATP synthesis in the catalytic domain of F(1) is coupled via a rotary mechanism of the central stalk subunits to proton translocation.</text>
</comment>
<comment type="function">
    <text evidence="1">This protein is part of the stalk that links CF(0) to CF(1). It either transmits conformational changes from CF(0) to CF(1) or is implicated in proton conduction.</text>
</comment>
<comment type="subunit">
    <text evidence="1">F-type ATPases have 2 components, F(1) - the catalytic core - and F(0) - the membrane proton channel. F(1) has five subunits: alpha(3), beta(3), gamma(1), delta(1), epsilon(1). CF(0) has four main subunits: a(1), b(1), b'(1) and c(10-14). The alpha and beta chains form an alternating ring which encloses part of the gamma chain. F(1) is attached to F(0) by a central stalk formed by the gamma and epsilon chains, while a peripheral stalk is formed by the delta, b and b' chains.</text>
</comment>
<comment type="subcellular location">
    <subcellularLocation>
        <location evidence="1">Cell inner membrane</location>
        <topology evidence="1">Peripheral membrane protein</topology>
    </subcellularLocation>
</comment>
<comment type="similarity">
    <text evidence="1">Belongs to the ATPase delta chain family.</text>
</comment>
<reference key="1">
    <citation type="journal article" date="2011" name="Stand. Genomic Sci.">
        <title>Complete genome sequence of Rhodospirillum rubrum type strain (S1).</title>
        <authorList>
            <person name="Munk A.C."/>
            <person name="Copeland A."/>
            <person name="Lucas S."/>
            <person name="Lapidus A."/>
            <person name="Del Rio T.G."/>
            <person name="Barry K."/>
            <person name="Detter J.C."/>
            <person name="Hammon N."/>
            <person name="Israni S."/>
            <person name="Pitluck S."/>
            <person name="Brettin T."/>
            <person name="Bruce D."/>
            <person name="Han C."/>
            <person name="Tapia R."/>
            <person name="Gilna P."/>
            <person name="Schmutz J."/>
            <person name="Larimer F."/>
            <person name="Land M."/>
            <person name="Kyrpides N.C."/>
            <person name="Mavromatis K."/>
            <person name="Richardson P."/>
            <person name="Rohde M."/>
            <person name="Goeker M."/>
            <person name="Klenk H.P."/>
            <person name="Zhang Y."/>
            <person name="Roberts G.P."/>
            <person name="Reslewic S."/>
            <person name="Schwartz D.C."/>
        </authorList>
    </citation>
    <scope>NUCLEOTIDE SEQUENCE [LARGE SCALE GENOMIC DNA]</scope>
    <source>
        <strain>ATCC 11170 / ATH 1.1.1 / DSM 467 / LMG 4362 / NCIMB 8255 / S1</strain>
    </source>
</reference>
<accession>Q2RV21</accession>